<sequence>MSIAALIDHTLLAPDVTAQHIRTLCREAVDHGFATVCVSPTRVRLAADELAGHAPRVCSVIGFPSGAHLSEIRAAETKAAVNDGADEIDMVINVGAVKDDDWDTVESDISAVVDAAGMAIVKVILEVSELTDEEITRACQAAERCGADFVKTSTGYSRHGATAEAVSLMRRTVGDRLGVKASGGIRTHNDVATMLRAGATRIGASAGVALLVDEEAL</sequence>
<organism>
    <name type="scientific">Cutibacterium acnes (strain DSM 16379 / KPA171202)</name>
    <name type="common">Propionibacterium acnes</name>
    <dbReference type="NCBI Taxonomy" id="267747"/>
    <lineage>
        <taxon>Bacteria</taxon>
        <taxon>Bacillati</taxon>
        <taxon>Actinomycetota</taxon>
        <taxon>Actinomycetes</taxon>
        <taxon>Propionibacteriales</taxon>
        <taxon>Propionibacteriaceae</taxon>
        <taxon>Cutibacterium</taxon>
    </lineage>
</organism>
<feature type="chain" id="PRO_0000231559" description="Deoxyribose-phosphate aldolase 1">
    <location>
        <begin position="1"/>
        <end position="217"/>
    </location>
</feature>
<feature type="active site" description="Proton donor/acceptor" evidence="1">
    <location>
        <position position="89"/>
    </location>
</feature>
<feature type="active site" description="Schiff-base intermediate with acetaldehyde" evidence="1">
    <location>
        <position position="151"/>
    </location>
</feature>
<feature type="active site" description="Proton donor/acceptor" evidence="1">
    <location>
        <position position="180"/>
    </location>
</feature>
<gene>
    <name evidence="1" type="primary">deoC1</name>
    <name type="ordered locus">PPA1214</name>
</gene>
<dbReference type="EC" id="4.1.2.4" evidence="1"/>
<dbReference type="EMBL" id="AE017283">
    <property type="protein sequence ID" value="AAT82964.1"/>
    <property type="molecule type" value="Genomic_DNA"/>
</dbReference>
<dbReference type="SMR" id="Q6A8F1"/>
<dbReference type="EnsemblBacteria" id="AAT82964">
    <property type="protein sequence ID" value="AAT82964"/>
    <property type="gene ID" value="PPA1214"/>
</dbReference>
<dbReference type="KEGG" id="pac:PPA1214"/>
<dbReference type="eggNOG" id="COG0274">
    <property type="taxonomic scope" value="Bacteria"/>
</dbReference>
<dbReference type="HOGENOM" id="CLU_053595_0_0_11"/>
<dbReference type="UniPathway" id="UPA00002">
    <property type="reaction ID" value="UER00468"/>
</dbReference>
<dbReference type="Proteomes" id="UP000000603">
    <property type="component" value="Chromosome"/>
</dbReference>
<dbReference type="GO" id="GO:0005737">
    <property type="term" value="C:cytoplasm"/>
    <property type="evidence" value="ECO:0007669"/>
    <property type="project" value="UniProtKB-SubCell"/>
</dbReference>
<dbReference type="GO" id="GO:0004139">
    <property type="term" value="F:deoxyribose-phosphate aldolase activity"/>
    <property type="evidence" value="ECO:0007669"/>
    <property type="project" value="UniProtKB-UniRule"/>
</dbReference>
<dbReference type="GO" id="GO:0006018">
    <property type="term" value="P:2-deoxyribose 1-phosphate catabolic process"/>
    <property type="evidence" value="ECO:0007669"/>
    <property type="project" value="UniProtKB-UniRule"/>
</dbReference>
<dbReference type="GO" id="GO:0016052">
    <property type="term" value="P:carbohydrate catabolic process"/>
    <property type="evidence" value="ECO:0007669"/>
    <property type="project" value="TreeGrafter"/>
</dbReference>
<dbReference type="GO" id="GO:0009264">
    <property type="term" value="P:deoxyribonucleotide catabolic process"/>
    <property type="evidence" value="ECO:0007669"/>
    <property type="project" value="InterPro"/>
</dbReference>
<dbReference type="CDD" id="cd00959">
    <property type="entry name" value="DeoC"/>
    <property type="match status" value="1"/>
</dbReference>
<dbReference type="FunFam" id="3.20.20.70:FF:000044">
    <property type="entry name" value="Deoxyribose-phosphate aldolase"/>
    <property type="match status" value="1"/>
</dbReference>
<dbReference type="Gene3D" id="3.20.20.70">
    <property type="entry name" value="Aldolase class I"/>
    <property type="match status" value="1"/>
</dbReference>
<dbReference type="HAMAP" id="MF_00114">
    <property type="entry name" value="DeoC_type1"/>
    <property type="match status" value="1"/>
</dbReference>
<dbReference type="InterPro" id="IPR013785">
    <property type="entry name" value="Aldolase_TIM"/>
</dbReference>
<dbReference type="InterPro" id="IPR011343">
    <property type="entry name" value="DeoC"/>
</dbReference>
<dbReference type="InterPro" id="IPR002915">
    <property type="entry name" value="DeoC/FbaB/LacD_aldolase"/>
</dbReference>
<dbReference type="InterPro" id="IPR028581">
    <property type="entry name" value="DeoC_typeI"/>
</dbReference>
<dbReference type="NCBIfam" id="TIGR00126">
    <property type="entry name" value="deoC"/>
    <property type="match status" value="1"/>
</dbReference>
<dbReference type="PANTHER" id="PTHR10889">
    <property type="entry name" value="DEOXYRIBOSE-PHOSPHATE ALDOLASE"/>
    <property type="match status" value="1"/>
</dbReference>
<dbReference type="PANTHER" id="PTHR10889:SF1">
    <property type="entry name" value="DEOXYRIBOSE-PHOSPHATE ALDOLASE"/>
    <property type="match status" value="1"/>
</dbReference>
<dbReference type="Pfam" id="PF01791">
    <property type="entry name" value="DeoC"/>
    <property type="match status" value="1"/>
</dbReference>
<dbReference type="PIRSF" id="PIRSF001357">
    <property type="entry name" value="DeoC"/>
    <property type="match status" value="1"/>
</dbReference>
<dbReference type="SMART" id="SM01133">
    <property type="entry name" value="DeoC"/>
    <property type="match status" value="1"/>
</dbReference>
<dbReference type="SUPFAM" id="SSF51569">
    <property type="entry name" value="Aldolase"/>
    <property type="match status" value="1"/>
</dbReference>
<protein>
    <recommendedName>
        <fullName evidence="1">Deoxyribose-phosphate aldolase 1</fullName>
        <shortName evidence="1">DERA 1</shortName>
        <ecNumber evidence="1">4.1.2.4</ecNumber>
    </recommendedName>
    <alternativeName>
        <fullName evidence="1">2-deoxy-D-ribose 5-phosphate aldolase 1</fullName>
    </alternativeName>
    <alternativeName>
        <fullName evidence="1">Phosphodeoxyriboaldolase 1</fullName>
        <shortName evidence="1">Deoxyriboaldolase 1</shortName>
    </alternativeName>
</protein>
<proteinExistence type="inferred from homology"/>
<reference key="1">
    <citation type="journal article" date="2004" name="Science">
        <title>The complete genome sequence of Propionibacterium acnes, a commensal of human skin.</title>
        <authorList>
            <person name="Brueggemann H."/>
            <person name="Henne A."/>
            <person name="Hoster F."/>
            <person name="Liesegang H."/>
            <person name="Wiezer A."/>
            <person name="Strittmatter A."/>
            <person name="Hujer S."/>
            <person name="Duerre P."/>
            <person name="Gottschalk G."/>
        </authorList>
    </citation>
    <scope>NUCLEOTIDE SEQUENCE [LARGE SCALE GENOMIC DNA]</scope>
    <source>
        <strain>DSM 16379 / KPA171202</strain>
    </source>
</reference>
<accession>Q6A8F1</accession>
<evidence type="ECO:0000255" key="1">
    <source>
        <dbReference type="HAMAP-Rule" id="MF_00114"/>
    </source>
</evidence>
<keyword id="KW-0963">Cytoplasm</keyword>
<keyword id="KW-0456">Lyase</keyword>
<keyword id="KW-0704">Schiff base</keyword>
<comment type="function">
    <text evidence="1">Catalyzes a reversible aldol reaction between acetaldehyde and D-glyceraldehyde 3-phosphate to generate 2-deoxy-D-ribose 5-phosphate.</text>
</comment>
<comment type="catalytic activity">
    <reaction evidence="1">
        <text>2-deoxy-D-ribose 5-phosphate = D-glyceraldehyde 3-phosphate + acetaldehyde</text>
        <dbReference type="Rhea" id="RHEA:12821"/>
        <dbReference type="ChEBI" id="CHEBI:15343"/>
        <dbReference type="ChEBI" id="CHEBI:59776"/>
        <dbReference type="ChEBI" id="CHEBI:62877"/>
        <dbReference type="EC" id="4.1.2.4"/>
    </reaction>
</comment>
<comment type="pathway">
    <text evidence="1">Carbohydrate degradation; 2-deoxy-D-ribose 1-phosphate degradation; D-glyceraldehyde 3-phosphate and acetaldehyde from 2-deoxy-alpha-D-ribose 1-phosphate: step 2/2.</text>
</comment>
<comment type="subcellular location">
    <subcellularLocation>
        <location evidence="1">Cytoplasm</location>
    </subcellularLocation>
</comment>
<comment type="similarity">
    <text evidence="1">Belongs to the DeoC/FbaB aldolase family. DeoC type 1 subfamily.</text>
</comment>
<name>DEOC1_CUTAK</name>